<name>RF1_STRZP</name>
<proteinExistence type="inferred from homology"/>
<comment type="function">
    <text evidence="1">Peptide chain release factor 1 directs the termination of translation in response to the peptide chain termination codons UAG and UAA.</text>
</comment>
<comment type="subcellular location">
    <subcellularLocation>
        <location evidence="1">Cytoplasm</location>
    </subcellularLocation>
</comment>
<comment type="PTM">
    <text evidence="1">Methylated by PrmC. Methylation increases the termination efficiency of RF1.</text>
</comment>
<comment type="similarity">
    <text evidence="1">Belongs to the prokaryotic/mitochondrial release factor family.</text>
</comment>
<protein>
    <recommendedName>
        <fullName evidence="1">Peptide chain release factor 1</fullName>
        <shortName evidence="1">RF-1</shortName>
    </recommendedName>
</protein>
<gene>
    <name evidence="1" type="primary">prfA</name>
    <name type="ordered locus">SPP_1026</name>
</gene>
<reference key="1">
    <citation type="journal article" date="2010" name="Genome Biol.">
        <title>Structure and dynamics of the pan-genome of Streptococcus pneumoniae and closely related species.</title>
        <authorList>
            <person name="Donati C."/>
            <person name="Hiller N.L."/>
            <person name="Tettelin H."/>
            <person name="Muzzi A."/>
            <person name="Croucher N.J."/>
            <person name="Angiuoli S.V."/>
            <person name="Oggioni M."/>
            <person name="Dunning Hotopp J.C."/>
            <person name="Hu F.Z."/>
            <person name="Riley D.R."/>
            <person name="Covacci A."/>
            <person name="Mitchell T.J."/>
            <person name="Bentley S.D."/>
            <person name="Kilian M."/>
            <person name="Ehrlich G.D."/>
            <person name="Rappuoli R."/>
            <person name="Moxon E.R."/>
            <person name="Masignani V."/>
        </authorList>
    </citation>
    <scope>NUCLEOTIDE SEQUENCE [LARGE SCALE GENOMIC DNA]</scope>
    <source>
        <strain>P1031</strain>
    </source>
</reference>
<accession>C1CK98</accession>
<dbReference type="EMBL" id="CP000920">
    <property type="protein sequence ID" value="ACO20219.1"/>
    <property type="molecule type" value="Genomic_DNA"/>
</dbReference>
<dbReference type="RefSeq" id="WP_001028801.1">
    <property type="nucleotide sequence ID" value="NC_012467.1"/>
</dbReference>
<dbReference type="SMR" id="C1CK98"/>
<dbReference type="GeneID" id="45653642"/>
<dbReference type="KEGG" id="spp:SPP_1026"/>
<dbReference type="HOGENOM" id="CLU_036856_0_1_9"/>
<dbReference type="GO" id="GO:0005737">
    <property type="term" value="C:cytoplasm"/>
    <property type="evidence" value="ECO:0007669"/>
    <property type="project" value="UniProtKB-SubCell"/>
</dbReference>
<dbReference type="GO" id="GO:0016149">
    <property type="term" value="F:translation release factor activity, codon specific"/>
    <property type="evidence" value="ECO:0007669"/>
    <property type="project" value="UniProtKB-UniRule"/>
</dbReference>
<dbReference type="FunFam" id="3.30.160.20:FF:000027">
    <property type="entry name" value="Peptide chain release factor 1"/>
    <property type="match status" value="1"/>
</dbReference>
<dbReference type="FunFam" id="3.30.70.1660:FF:000002">
    <property type="entry name" value="Peptide chain release factor 1"/>
    <property type="match status" value="1"/>
</dbReference>
<dbReference type="FunFam" id="3.30.70.1660:FF:000004">
    <property type="entry name" value="Peptide chain release factor 1"/>
    <property type="match status" value="1"/>
</dbReference>
<dbReference type="Gene3D" id="3.30.160.20">
    <property type="match status" value="1"/>
</dbReference>
<dbReference type="Gene3D" id="3.30.70.1660">
    <property type="match status" value="2"/>
</dbReference>
<dbReference type="Gene3D" id="6.10.140.1950">
    <property type="match status" value="1"/>
</dbReference>
<dbReference type="HAMAP" id="MF_00093">
    <property type="entry name" value="Rel_fac_1"/>
    <property type="match status" value="1"/>
</dbReference>
<dbReference type="InterPro" id="IPR005139">
    <property type="entry name" value="PCRF"/>
</dbReference>
<dbReference type="InterPro" id="IPR000352">
    <property type="entry name" value="Pep_chain_release_fac_I"/>
</dbReference>
<dbReference type="InterPro" id="IPR045853">
    <property type="entry name" value="Pep_chain_release_fac_I_sf"/>
</dbReference>
<dbReference type="InterPro" id="IPR050057">
    <property type="entry name" value="Prokaryotic/Mito_RF"/>
</dbReference>
<dbReference type="InterPro" id="IPR004373">
    <property type="entry name" value="RF-1"/>
</dbReference>
<dbReference type="NCBIfam" id="TIGR00019">
    <property type="entry name" value="prfA"/>
    <property type="match status" value="1"/>
</dbReference>
<dbReference type="NCBIfam" id="NF001859">
    <property type="entry name" value="PRK00591.1"/>
    <property type="match status" value="1"/>
</dbReference>
<dbReference type="PANTHER" id="PTHR43804">
    <property type="entry name" value="LD18447P"/>
    <property type="match status" value="1"/>
</dbReference>
<dbReference type="PANTHER" id="PTHR43804:SF7">
    <property type="entry name" value="LD18447P"/>
    <property type="match status" value="1"/>
</dbReference>
<dbReference type="Pfam" id="PF03462">
    <property type="entry name" value="PCRF"/>
    <property type="match status" value="1"/>
</dbReference>
<dbReference type="Pfam" id="PF00472">
    <property type="entry name" value="RF-1"/>
    <property type="match status" value="1"/>
</dbReference>
<dbReference type="SMART" id="SM00937">
    <property type="entry name" value="PCRF"/>
    <property type="match status" value="1"/>
</dbReference>
<dbReference type="SUPFAM" id="SSF75620">
    <property type="entry name" value="Release factor"/>
    <property type="match status" value="1"/>
</dbReference>
<dbReference type="PROSITE" id="PS00745">
    <property type="entry name" value="RF_PROK_I"/>
    <property type="match status" value="1"/>
</dbReference>
<organism>
    <name type="scientific">Streptococcus pneumoniae (strain P1031)</name>
    <dbReference type="NCBI Taxonomy" id="488223"/>
    <lineage>
        <taxon>Bacteria</taxon>
        <taxon>Bacillati</taxon>
        <taxon>Bacillota</taxon>
        <taxon>Bacilli</taxon>
        <taxon>Lactobacillales</taxon>
        <taxon>Streptococcaceae</taxon>
        <taxon>Streptococcus</taxon>
    </lineage>
</organism>
<feature type="chain" id="PRO_1000193509" description="Peptide chain release factor 1">
    <location>
        <begin position="1"/>
        <end position="359"/>
    </location>
</feature>
<feature type="modified residue" description="N5-methylglutamine" evidence="1">
    <location>
        <position position="236"/>
    </location>
</feature>
<keyword id="KW-0963">Cytoplasm</keyword>
<keyword id="KW-0488">Methylation</keyword>
<keyword id="KW-0648">Protein biosynthesis</keyword>
<sequence>MNIYDQLQAVEDRYEELGELLSDPDVVSDTKRFMELSKEEASNRDTVIAYREYKQVLQNIVDAEEMIKESGGDADLEEMAKQELKDAKAEKEEYEEKLKILLLPKDPNDDKNIILEIRGAAGGDEAALFAGDLLTMYQKYAEAQGWRFEVMEASMNGVGGFKEVVAMVSGQSVYSKLKYESGAHRVQRVPVTESQGRVHTSTATVLVMPEVEEVEYDIDPKDLRVDIYHASGAGGQNVNKVATAVRIVHLPTNIKVEMQEERTQQKNREKAMKIIRARVADHFAQIAQDEQDAERKSTIGTGDRSERIRTYNFPQNRVTDHRIGLTLQKLDTILSGKLDEVVDALVLYDQTQKLEELNK</sequence>
<evidence type="ECO:0000255" key="1">
    <source>
        <dbReference type="HAMAP-Rule" id="MF_00093"/>
    </source>
</evidence>